<protein>
    <recommendedName>
        <fullName evidence="1">Glutamate--tRNA ligase</fullName>
        <ecNumber evidence="1">6.1.1.17</ecNumber>
    </recommendedName>
    <alternativeName>
        <fullName evidence="1">Glutamyl-tRNA synthetase</fullName>
        <shortName evidence="1">GluRS</shortName>
    </alternativeName>
</protein>
<proteinExistence type="inferred from homology"/>
<name>SYE_ECO24</name>
<comment type="function">
    <text evidence="1">Catalyzes the attachment of glutamate to tRNA(Glu) in a two-step reaction: glutamate is first activated by ATP to form Glu-AMP and then transferred to the acceptor end of tRNA(Glu).</text>
</comment>
<comment type="catalytic activity">
    <reaction evidence="1">
        <text>tRNA(Glu) + L-glutamate + ATP = L-glutamyl-tRNA(Glu) + AMP + diphosphate</text>
        <dbReference type="Rhea" id="RHEA:23540"/>
        <dbReference type="Rhea" id="RHEA-COMP:9663"/>
        <dbReference type="Rhea" id="RHEA-COMP:9680"/>
        <dbReference type="ChEBI" id="CHEBI:29985"/>
        <dbReference type="ChEBI" id="CHEBI:30616"/>
        <dbReference type="ChEBI" id="CHEBI:33019"/>
        <dbReference type="ChEBI" id="CHEBI:78442"/>
        <dbReference type="ChEBI" id="CHEBI:78520"/>
        <dbReference type="ChEBI" id="CHEBI:456215"/>
        <dbReference type="EC" id="6.1.1.17"/>
    </reaction>
</comment>
<comment type="cofactor">
    <cofactor evidence="1">
        <name>Zn(2+)</name>
        <dbReference type="ChEBI" id="CHEBI:29105"/>
    </cofactor>
    <text evidence="1">Binds 1 zinc ion per subunit.</text>
</comment>
<comment type="subunit">
    <text evidence="1">Monomer.</text>
</comment>
<comment type="subcellular location">
    <subcellularLocation>
        <location evidence="1">Cytoplasm</location>
    </subcellularLocation>
</comment>
<comment type="similarity">
    <text evidence="1">Belongs to the class-I aminoacyl-tRNA synthetase family. Glutamate--tRNA ligase type 1 subfamily.</text>
</comment>
<evidence type="ECO:0000255" key="1">
    <source>
        <dbReference type="HAMAP-Rule" id="MF_00022"/>
    </source>
</evidence>
<dbReference type="EC" id="6.1.1.17" evidence="1"/>
<dbReference type="EMBL" id="CP000800">
    <property type="protein sequence ID" value="ABV18459.1"/>
    <property type="molecule type" value="Genomic_DNA"/>
</dbReference>
<dbReference type="RefSeq" id="WP_000695655.1">
    <property type="nucleotide sequence ID" value="NC_009801.1"/>
</dbReference>
<dbReference type="SMR" id="A7ZPK7"/>
<dbReference type="GeneID" id="93774730"/>
<dbReference type="KEGG" id="ecw:EcE24377A_2689"/>
<dbReference type="HOGENOM" id="CLU_015768_6_0_6"/>
<dbReference type="Proteomes" id="UP000001122">
    <property type="component" value="Chromosome"/>
</dbReference>
<dbReference type="GO" id="GO:0005829">
    <property type="term" value="C:cytosol"/>
    <property type="evidence" value="ECO:0007669"/>
    <property type="project" value="TreeGrafter"/>
</dbReference>
<dbReference type="GO" id="GO:0005524">
    <property type="term" value="F:ATP binding"/>
    <property type="evidence" value="ECO:0007669"/>
    <property type="project" value="UniProtKB-UniRule"/>
</dbReference>
<dbReference type="GO" id="GO:0004818">
    <property type="term" value="F:glutamate-tRNA ligase activity"/>
    <property type="evidence" value="ECO:0007669"/>
    <property type="project" value="UniProtKB-UniRule"/>
</dbReference>
<dbReference type="GO" id="GO:0000049">
    <property type="term" value="F:tRNA binding"/>
    <property type="evidence" value="ECO:0007669"/>
    <property type="project" value="InterPro"/>
</dbReference>
<dbReference type="GO" id="GO:0008270">
    <property type="term" value="F:zinc ion binding"/>
    <property type="evidence" value="ECO:0007669"/>
    <property type="project" value="UniProtKB-UniRule"/>
</dbReference>
<dbReference type="GO" id="GO:0006424">
    <property type="term" value="P:glutamyl-tRNA aminoacylation"/>
    <property type="evidence" value="ECO:0007669"/>
    <property type="project" value="UniProtKB-UniRule"/>
</dbReference>
<dbReference type="CDD" id="cd00808">
    <property type="entry name" value="GluRS_core"/>
    <property type="match status" value="1"/>
</dbReference>
<dbReference type="FunFam" id="1.10.10.350:FF:000001">
    <property type="entry name" value="Glutamate--tRNA ligase"/>
    <property type="match status" value="1"/>
</dbReference>
<dbReference type="FunFam" id="3.40.50.620:FF:000007">
    <property type="entry name" value="Glutamate--tRNA ligase"/>
    <property type="match status" value="1"/>
</dbReference>
<dbReference type="Gene3D" id="1.10.10.350">
    <property type="match status" value="1"/>
</dbReference>
<dbReference type="Gene3D" id="3.40.50.620">
    <property type="entry name" value="HUPs"/>
    <property type="match status" value="1"/>
</dbReference>
<dbReference type="HAMAP" id="MF_00022">
    <property type="entry name" value="Glu_tRNA_synth_type1"/>
    <property type="match status" value="1"/>
</dbReference>
<dbReference type="InterPro" id="IPR045462">
    <property type="entry name" value="aa-tRNA-synth_I_cd-bd"/>
</dbReference>
<dbReference type="InterPro" id="IPR020751">
    <property type="entry name" value="aa-tRNA-synth_I_codon-bd_sub2"/>
</dbReference>
<dbReference type="InterPro" id="IPR001412">
    <property type="entry name" value="aa-tRNA-synth_I_CS"/>
</dbReference>
<dbReference type="InterPro" id="IPR008925">
    <property type="entry name" value="aa_tRNA-synth_I_cd-bd_sf"/>
</dbReference>
<dbReference type="InterPro" id="IPR004527">
    <property type="entry name" value="Glu-tRNA-ligase_bac/mito"/>
</dbReference>
<dbReference type="InterPro" id="IPR000924">
    <property type="entry name" value="Glu/Gln-tRNA-synth"/>
</dbReference>
<dbReference type="InterPro" id="IPR020058">
    <property type="entry name" value="Glu/Gln-tRNA-synth_Ib_cat-dom"/>
</dbReference>
<dbReference type="InterPro" id="IPR049940">
    <property type="entry name" value="GluQ/Sye"/>
</dbReference>
<dbReference type="InterPro" id="IPR033910">
    <property type="entry name" value="GluRS_core"/>
</dbReference>
<dbReference type="InterPro" id="IPR014729">
    <property type="entry name" value="Rossmann-like_a/b/a_fold"/>
</dbReference>
<dbReference type="NCBIfam" id="TIGR00464">
    <property type="entry name" value="gltX_bact"/>
    <property type="match status" value="1"/>
</dbReference>
<dbReference type="PANTHER" id="PTHR43311">
    <property type="entry name" value="GLUTAMATE--TRNA LIGASE"/>
    <property type="match status" value="1"/>
</dbReference>
<dbReference type="PANTHER" id="PTHR43311:SF2">
    <property type="entry name" value="GLUTAMATE--TRNA LIGASE, MITOCHONDRIAL-RELATED"/>
    <property type="match status" value="1"/>
</dbReference>
<dbReference type="Pfam" id="PF19269">
    <property type="entry name" value="Anticodon_2"/>
    <property type="match status" value="1"/>
</dbReference>
<dbReference type="Pfam" id="PF00749">
    <property type="entry name" value="tRNA-synt_1c"/>
    <property type="match status" value="1"/>
</dbReference>
<dbReference type="PRINTS" id="PR00987">
    <property type="entry name" value="TRNASYNTHGLU"/>
</dbReference>
<dbReference type="SUPFAM" id="SSF48163">
    <property type="entry name" value="An anticodon-binding domain of class I aminoacyl-tRNA synthetases"/>
    <property type="match status" value="1"/>
</dbReference>
<dbReference type="SUPFAM" id="SSF52374">
    <property type="entry name" value="Nucleotidylyl transferase"/>
    <property type="match status" value="1"/>
</dbReference>
<dbReference type="PROSITE" id="PS00178">
    <property type="entry name" value="AA_TRNA_LIGASE_I"/>
    <property type="match status" value="1"/>
</dbReference>
<accession>A7ZPK7</accession>
<feature type="chain" id="PRO_1000057192" description="Glutamate--tRNA ligase">
    <location>
        <begin position="1"/>
        <end position="471"/>
    </location>
</feature>
<feature type="short sequence motif" description="'HIGH' region" evidence="1">
    <location>
        <begin position="9"/>
        <end position="19"/>
    </location>
</feature>
<feature type="short sequence motif" description="'KMSKS' region" evidence="1">
    <location>
        <begin position="237"/>
        <end position="241"/>
    </location>
</feature>
<feature type="binding site" evidence="1">
    <location>
        <position position="98"/>
    </location>
    <ligand>
        <name>Zn(2+)</name>
        <dbReference type="ChEBI" id="CHEBI:29105"/>
    </ligand>
</feature>
<feature type="binding site" evidence="1">
    <location>
        <position position="100"/>
    </location>
    <ligand>
        <name>Zn(2+)</name>
        <dbReference type="ChEBI" id="CHEBI:29105"/>
    </ligand>
</feature>
<feature type="binding site" evidence="1">
    <location>
        <position position="125"/>
    </location>
    <ligand>
        <name>Zn(2+)</name>
        <dbReference type="ChEBI" id="CHEBI:29105"/>
    </ligand>
</feature>
<feature type="binding site" evidence="1">
    <location>
        <position position="127"/>
    </location>
    <ligand>
        <name>Zn(2+)</name>
        <dbReference type="ChEBI" id="CHEBI:29105"/>
    </ligand>
</feature>
<feature type="binding site" evidence="1">
    <location>
        <position position="240"/>
    </location>
    <ligand>
        <name>ATP</name>
        <dbReference type="ChEBI" id="CHEBI:30616"/>
    </ligand>
</feature>
<reference key="1">
    <citation type="journal article" date="2008" name="J. Bacteriol.">
        <title>The pangenome structure of Escherichia coli: comparative genomic analysis of E. coli commensal and pathogenic isolates.</title>
        <authorList>
            <person name="Rasko D.A."/>
            <person name="Rosovitz M.J."/>
            <person name="Myers G.S.A."/>
            <person name="Mongodin E.F."/>
            <person name="Fricke W.F."/>
            <person name="Gajer P."/>
            <person name="Crabtree J."/>
            <person name="Sebaihia M."/>
            <person name="Thomson N.R."/>
            <person name="Chaudhuri R."/>
            <person name="Henderson I.R."/>
            <person name="Sperandio V."/>
            <person name="Ravel J."/>
        </authorList>
    </citation>
    <scope>NUCLEOTIDE SEQUENCE [LARGE SCALE GENOMIC DNA]</scope>
    <source>
        <strain>E24377A / ETEC</strain>
    </source>
</reference>
<keyword id="KW-0030">Aminoacyl-tRNA synthetase</keyword>
<keyword id="KW-0067">ATP-binding</keyword>
<keyword id="KW-0963">Cytoplasm</keyword>
<keyword id="KW-0436">Ligase</keyword>
<keyword id="KW-0479">Metal-binding</keyword>
<keyword id="KW-0547">Nucleotide-binding</keyword>
<keyword id="KW-0648">Protein biosynthesis</keyword>
<keyword id="KW-1185">Reference proteome</keyword>
<keyword id="KW-0862">Zinc</keyword>
<gene>
    <name evidence="1" type="primary">gltX</name>
    <name type="ordered locus">EcE24377A_2689</name>
</gene>
<organism>
    <name type="scientific">Escherichia coli O139:H28 (strain E24377A / ETEC)</name>
    <dbReference type="NCBI Taxonomy" id="331111"/>
    <lineage>
        <taxon>Bacteria</taxon>
        <taxon>Pseudomonadati</taxon>
        <taxon>Pseudomonadota</taxon>
        <taxon>Gammaproteobacteria</taxon>
        <taxon>Enterobacterales</taxon>
        <taxon>Enterobacteriaceae</taxon>
        <taxon>Escherichia</taxon>
    </lineage>
</organism>
<sequence length="471" mass="53816">MKIKTRFAPSPTGYLHVGGARTALYSWLFARNHGGEFVLRIEDTDLERSTPEAIEAIMDGMNWLSLEWDEGPYYQTKRFDRYNAVIDQMLEEGTAYKCYCSKERLEALREEQMAKGEKPRYDGRCRHSHEHHADDEPCVVRFANPQEGSVVFDDQIRGPIEFSNQELDDLIIRRTDGSPTYNFCVVVDDWDMEITHVIRGEDHINNTPRQINILKALKAPVPVYAHVSMINGDDGKKLSKRHGAVSVMQYRDDGYLPEALLNYLVRLGWSHGDQEIFTREEMIKYFTLNAVSKSASAFNTDKLLWLNHHYINALPPEYVATHLQWHIEQENIDTRNGPQLADLVKLLGERCKTLKEMAQSCRYFYEDFAEFDADAAKKHLRPVARQPLEVVRDKLAAITDWTAENVHHAIQATADELEVGMGKVGMPLRVAVTGAGQSPALDVTVHAIGKTRSIERINKALDFIAERENQQ</sequence>